<protein>
    <recommendedName>
        <fullName>Collagen alpha-1(XXVII) chain</fullName>
    </recommendedName>
</protein>
<reference key="1">
    <citation type="journal article" date="2003" name="Matrix Biol.">
        <title>Identification, characterization and expression analysis of a new fibrillar collagen gene, COL27A1.</title>
        <authorList>
            <person name="Pace J.M."/>
            <person name="Corrado M."/>
            <person name="Missero C."/>
            <person name="Byers P.H."/>
        </authorList>
    </citation>
    <scope>NUCLEOTIDE SEQUENCE [MRNA] (ISOFORM 1)</scope>
    <source>
        <tissue>Cartilage</tissue>
    </source>
</reference>
<reference key="2">
    <citation type="journal article" date="2001" name="DNA Res.">
        <title>Prediction of the coding sequences of unidentified human genes. XX. The complete sequences of 100 new cDNA clones from brain which code for large proteins in vitro.</title>
        <authorList>
            <person name="Nagase T."/>
            <person name="Nakayama M."/>
            <person name="Nakajima D."/>
            <person name="Kikuno R."/>
            <person name="Ohara O."/>
        </authorList>
    </citation>
    <scope>NUCLEOTIDE SEQUENCE [LARGE SCALE MRNA] (ISOFORM 2)</scope>
    <source>
        <tissue>Brain</tissue>
    </source>
</reference>
<reference key="3">
    <citation type="journal article" date="2004" name="Nature">
        <title>DNA sequence and analysis of human chromosome 9.</title>
        <authorList>
            <person name="Humphray S.J."/>
            <person name="Oliver K."/>
            <person name="Hunt A.R."/>
            <person name="Plumb R.W."/>
            <person name="Loveland J.E."/>
            <person name="Howe K.L."/>
            <person name="Andrews T.D."/>
            <person name="Searle S."/>
            <person name="Hunt S.E."/>
            <person name="Scott C.E."/>
            <person name="Jones M.C."/>
            <person name="Ainscough R."/>
            <person name="Almeida J.P."/>
            <person name="Ambrose K.D."/>
            <person name="Ashwell R.I.S."/>
            <person name="Babbage A.K."/>
            <person name="Babbage S."/>
            <person name="Bagguley C.L."/>
            <person name="Bailey J."/>
            <person name="Banerjee R."/>
            <person name="Barker D.J."/>
            <person name="Barlow K.F."/>
            <person name="Bates K."/>
            <person name="Beasley H."/>
            <person name="Beasley O."/>
            <person name="Bird C.P."/>
            <person name="Bray-Allen S."/>
            <person name="Brown A.J."/>
            <person name="Brown J.Y."/>
            <person name="Burford D."/>
            <person name="Burrill W."/>
            <person name="Burton J."/>
            <person name="Carder C."/>
            <person name="Carter N.P."/>
            <person name="Chapman J.C."/>
            <person name="Chen Y."/>
            <person name="Clarke G."/>
            <person name="Clark S.Y."/>
            <person name="Clee C.M."/>
            <person name="Clegg S."/>
            <person name="Collier R.E."/>
            <person name="Corby N."/>
            <person name="Crosier M."/>
            <person name="Cummings A.T."/>
            <person name="Davies J."/>
            <person name="Dhami P."/>
            <person name="Dunn M."/>
            <person name="Dutta I."/>
            <person name="Dyer L.W."/>
            <person name="Earthrowl M.E."/>
            <person name="Faulkner L."/>
            <person name="Fleming C.J."/>
            <person name="Frankish A."/>
            <person name="Frankland J.A."/>
            <person name="French L."/>
            <person name="Fricker D.G."/>
            <person name="Garner P."/>
            <person name="Garnett J."/>
            <person name="Ghori J."/>
            <person name="Gilbert J.G.R."/>
            <person name="Glison C."/>
            <person name="Grafham D.V."/>
            <person name="Gribble S."/>
            <person name="Griffiths C."/>
            <person name="Griffiths-Jones S."/>
            <person name="Grocock R."/>
            <person name="Guy J."/>
            <person name="Hall R.E."/>
            <person name="Hammond S."/>
            <person name="Harley J.L."/>
            <person name="Harrison E.S.I."/>
            <person name="Hart E.A."/>
            <person name="Heath P.D."/>
            <person name="Henderson C.D."/>
            <person name="Hopkins B.L."/>
            <person name="Howard P.J."/>
            <person name="Howden P.J."/>
            <person name="Huckle E."/>
            <person name="Johnson C."/>
            <person name="Johnson D."/>
            <person name="Joy A.A."/>
            <person name="Kay M."/>
            <person name="Keenan S."/>
            <person name="Kershaw J.K."/>
            <person name="Kimberley A.M."/>
            <person name="King A."/>
            <person name="Knights A."/>
            <person name="Laird G.K."/>
            <person name="Langford C."/>
            <person name="Lawlor S."/>
            <person name="Leongamornlert D.A."/>
            <person name="Leversha M."/>
            <person name="Lloyd C."/>
            <person name="Lloyd D.M."/>
            <person name="Lovell J."/>
            <person name="Martin S."/>
            <person name="Mashreghi-Mohammadi M."/>
            <person name="Matthews L."/>
            <person name="McLaren S."/>
            <person name="McLay K.E."/>
            <person name="McMurray A."/>
            <person name="Milne S."/>
            <person name="Nickerson T."/>
            <person name="Nisbett J."/>
            <person name="Nordsiek G."/>
            <person name="Pearce A.V."/>
            <person name="Peck A.I."/>
            <person name="Porter K.M."/>
            <person name="Pandian R."/>
            <person name="Pelan S."/>
            <person name="Phillimore B."/>
            <person name="Povey S."/>
            <person name="Ramsey Y."/>
            <person name="Rand V."/>
            <person name="Scharfe M."/>
            <person name="Sehra H.K."/>
            <person name="Shownkeen R."/>
            <person name="Sims S.K."/>
            <person name="Skuce C.D."/>
            <person name="Smith M."/>
            <person name="Steward C.A."/>
            <person name="Swarbreck D."/>
            <person name="Sycamore N."/>
            <person name="Tester J."/>
            <person name="Thorpe A."/>
            <person name="Tracey A."/>
            <person name="Tromans A."/>
            <person name="Thomas D.W."/>
            <person name="Wall M."/>
            <person name="Wallis J.M."/>
            <person name="West A.P."/>
            <person name="Whitehead S.L."/>
            <person name="Willey D.L."/>
            <person name="Williams S.A."/>
            <person name="Wilming L."/>
            <person name="Wray P.W."/>
            <person name="Young L."/>
            <person name="Ashurst J.L."/>
            <person name="Coulson A."/>
            <person name="Blocker H."/>
            <person name="Durbin R.M."/>
            <person name="Sulston J.E."/>
            <person name="Hubbard T."/>
            <person name="Jackson M.J."/>
            <person name="Bentley D.R."/>
            <person name="Beck S."/>
            <person name="Rogers J."/>
            <person name="Dunham I."/>
        </authorList>
    </citation>
    <scope>NUCLEOTIDE SEQUENCE [LARGE SCALE GENOMIC DNA]</scope>
</reference>
<reference key="4">
    <citation type="journal article" date="2004" name="Genome Res.">
        <title>The status, quality, and expansion of the NIH full-length cDNA project: the Mammalian Gene Collection (MGC).</title>
        <authorList>
            <consortium name="The MGC Project Team"/>
        </authorList>
    </citation>
    <scope>NUCLEOTIDE SEQUENCE [LARGE SCALE MRNA] OF 238-1860 (ISOFORM 3)</scope>
    <scope>VARIANTS THR-422; THR-537 AND PHE-611</scope>
    <source>
        <tissue>Skin</tissue>
    </source>
</reference>
<reference key="5">
    <citation type="journal article" date="2007" name="Bone">
        <title>Type XXVII collagen at the transition of cartilage to bone during skeletogenesis.</title>
        <authorList>
            <person name="Hjorten R."/>
            <person name="Hansen U."/>
            <person name="Underwood R.A."/>
            <person name="Telfer H.E."/>
            <person name="Fernandes R.J."/>
            <person name="Krakow D."/>
            <person name="Sebald E."/>
            <person name="Wachsmann-Hogiu S."/>
            <person name="Bruckner P."/>
            <person name="Jacquet R."/>
            <person name="Landis W.J."/>
            <person name="Byers P.H."/>
            <person name="Pace J.M."/>
        </authorList>
    </citation>
    <scope>FUNCTION</scope>
    <scope>DEVELOPMENTAL STAGE</scope>
</reference>
<reference key="6">
    <citation type="journal article" date="2015" name="Eur. J. Hum. Genet.">
        <title>Mutations in COL27A1 cause Steel syndrome and suggest a founder mutation effect in the Puerto Rican population.</title>
        <authorList>
            <person name="Gonzaga-Jauregui C."/>
            <person name="Gamble C.N."/>
            <person name="Yuan B."/>
            <person name="Penney S."/>
            <person name="Jhangiani S."/>
            <person name="Muzny D.M."/>
            <person name="Gibbs R.A."/>
            <person name="Lupski J.R."/>
            <person name="Hecht J.T."/>
        </authorList>
    </citation>
    <scope>INVOLVEMENT IN STLS</scope>
    <scope>VARIANT STLS ARG-697</scope>
</reference>
<organism>
    <name type="scientific">Homo sapiens</name>
    <name type="common">Human</name>
    <dbReference type="NCBI Taxonomy" id="9606"/>
    <lineage>
        <taxon>Eukaryota</taxon>
        <taxon>Metazoa</taxon>
        <taxon>Chordata</taxon>
        <taxon>Craniata</taxon>
        <taxon>Vertebrata</taxon>
        <taxon>Euteleostomi</taxon>
        <taxon>Mammalia</taxon>
        <taxon>Eutheria</taxon>
        <taxon>Euarchontoglires</taxon>
        <taxon>Primates</taxon>
        <taxon>Haplorrhini</taxon>
        <taxon>Catarrhini</taxon>
        <taxon>Hominidae</taxon>
        <taxon>Homo</taxon>
    </lineage>
</organism>
<name>CORA1_HUMAN</name>
<comment type="function">
    <text evidence="6">Plays a role during the calcification of cartilage and the transition of cartilage to bone.</text>
</comment>
<comment type="subcellular location">
    <subcellularLocation>
        <location>Secreted</location>
        <location>Extracellular space</location>
        <location>Extracellular matrix</location>
    </subcellularLocation>
    <text evidence="1">Found on some small banded collagen fibrils and meshworks.</text>
</comment>
<comment type="alternative products">
    <event type="alternative splicing"/>
    <isoform>
        <id>Q8IZC6-1</id>
        <name>1</name>
        <sequence type="displayed"/>
    </isoform>
    <isoform>
        <id>Q8IZC6-2</id>
        <name>2</name>
        <sequence type="described" ref="VSP_030347"/>
    </isoform>
    <isoform>
        <id>Q8IZC6-3</id>
        <name>3</name>
        <sequence type="described" ref="VSP_030348 VSP_030349"/>
    </isoform>
</comment>
<comment type="developmental stage">
    <text evidence="6">Detected at 67 dpc in the primary ossification center and is tightly restricted to the pericellular region of the hypertrophic chondrocytes and lacunae at the very center of the future diaphysis. At fetal 20-week highly abundant in the hypertrophic zone at the chondroosseous junction. Weakly detected around cells in the resting and proliferative zone of the cartilaginous plate, but the intense detection occurred deep in the hypertrophic zone near the newly formed bone. Detected throughout the extracellular matrix (ECM) in this zone it is also closely situated around hypertrophic chondrocytes.</text>
</comment>
<comment type="domain">
    <text evidence="1">The C-terminal propeptide, also known as COLFI domain, have crucial roles in tissue growth and repair by controlling both the intracellular assembly of procollagen molecules and the extracellular assembly of collagen fibrils. It binds a calcium ion which is essential for its function (By similarity).</text>
</comment>
<comment type="disease" evidence="7">
    <disease id="DI-04187">
        <name>Steel syndrome</name>
        <acronym>STLS</acronym>
        <description>A syndrome characterized by dislocated hips and radial heads, fusion of carpal bones, short stature, scoliosis, and cervical spine anomalies. Facial features include prominent forehead, long oval-shaped face, hypertelorism and broad nasal bridge.</description>
        <dbReference type="MIM" id="615155"/>
    </disease>
    <text>The disease is caused by variants affecting the gene represented in this entry.</text>
</comment>
<comment type="similarity">
    <text evidence="3">Belongs to the fibrillar collagen family.</text>
</comment>
<comment type="sequence caution" evidence="10">
    <conflict type="erroneous initiation">
        <sequence resource="EMBL-CDS" id="BAB47499"/>
    </conflict>
    <text>Truncated N-terminus.</text>
</comment>
<keyword id="KW-0025">Alternative splicing</keyword>
<keyword id="KW-0106">Calcium</keyword>
<keyword id="KW-0176">Collagen</keyword>
<keyword id="KW-0225">Disease variant</keyword>
<keyword id="KW-1015">Disulfide bond</keyword>
<keyword id="KW-0242">Dwarfism</keyword>
<keyword id="KW-0272">Extracellular matrix</keyword>
<keyword id="KW-0325">Glycoprotein</keyword>
<keyword id="KW-0479">Metal-binding</keyword>
<keyword id="KW-1267">Proteomics identification</keyword>
<keyword id="KW-1185">Reference proteome</keyword>
<keyword id="KW-0677">Repeat</keyword>
<keyword id="KW-0964">Secreted</keyword>
<keyword id="KW-0732">Signal</keyword>
<evidence type="ECO:0000250" key="1"/>
<evidence type="ECO:0000255" key="2"/>
<evidence type="ECO:0000255" key="3">
    <source>
        <dbReference type="PROSITE-ProRule" id="PRU00793"/>
    </source>
</evidence>
<evidence type="ECO:0000256" key="4">
    <source>
        <dbReference type="SAM" id="MobiDB-lite"/>
    </source>
</evidence>
<evidence type="ECO:0000269" key="5">
    <source>
    </source>
</evidence>
<evidence type="ECO:0000269" key="6">
    <source>
    </source>
</evidence>
<evidence type="ECO:0000269" key="7">
    <source>
    </source>
</evidence>
<evidence type="ECO:0000303" key="8">
    <source>
    </source>
</evidence>
<evidence type="ECO:0000303" key="9">
    <source>
    </source>
</evidence>
<evidence type="ECO:0000305" key="10"/>
<gene>
    <name type="primary">COL27A1</name>
    <name type="synonym">KIAA1870</name>
</gene>
<dbReference type="EMBL" id="AY149237">
    <property type="protein sequence ID" value="AAN41263.1"/>
    <property type="molecule type" value="mRNA"/>
</dbReference>
<dbReference type="EMBL" id="AB058773">
    <property type="protein sequence ID" value="BAB47499.1"/>
    <property type="status" value="ALT_INIT"/>
    <property type="molecule type" value="mRNA"/>
</dbReference>
<dbReference type="EMBL" id="AL356796">
    <property type="status" value="NOT_ANNOTATED_CDS"/>
    <property type="molecule type" value="Genomic_DNA"/>
</dbReference>
<dbReference type="EMBL" id="AL445543">
    <property type="status" value="NOT_ANNOTATED_CDS"/>
    <property type="molecule type" value="Genomic_DNA"/>
</dbReference>
<dbReference type="EMBL" id="BC080610">
    <property type="protein sequence ID" value="AAH80610.1"/>
    <property type="molecule type" value="mRNA"/>
</dbReference>
<dbReference type="CCDS" id="CCDS6802.1">
    <molecule id="Q8IZC6-1"/>
</dbReference>
<dbReference type="RefSeq" id="NP_116277.2">
    <molecule id="Q8IZC6-1"/>
    <property type="nucleotide sequence ID" value="NM_032888.3"/>
</dbReference>
<dbReference type="SMR" id="Q8IZC6"/>
<dbReference type="BioGRID" id="124464">
    <property type="interactions" value="8"/>
</dbReference>
<dbReference type="ComplexPortal" id="CPX-1768">
    <property type="entry name" value="Collagen type XXVII trimer"/>
</dbReference>
<dbReference type="FunCoup" id="Q8IZC6">
    <property type="interactions" value="158"/>
</dbReference>
<dbReference type="IntAct" id="Q8IZC6">
    <property type="interactions" value="6"/>
</dbReference>
<dbReference type="MINT" id="Q8IZC6"/>
<dbReference type="STRING" id="9606.ENSP00000348385"/>
<dbReference type="ChEMBL" id="CHEMBL2364188"/>
<dbReference type="GlyCosmos" id="Q8IZC6">
    <property type="glycosylation" value="3 sites, 1 glycan"/>
</dbReference>
<dbReference type="GlyGen" id="Q8IZC6">
    <property type="glycosylation" value="9 sites, 2 O-linked glycans (2 sites)"/>
</dbReference>
<dbReference type="iPTMnet" id="Q8IZC6"/>
<dbReference type="PhosphoSitePlus" id="Q8IZC6"/>
<dbReference type="BioMuta" id="COL27A1"/>
<dbReference type="DMDM" id="74762504"/>
<dbReference type="jPOST" id="Q8IZC6"/>
<dbReference type="MassIVE" id="Q8IZC6"/>
<dbReference type="PaxDb" id="9606-ENSP00000348385"/>
<dbReference type="PeptideAtlas" id="Q8IZC6"/>
<dbReference type="ProteomicsDB" id="71316">
    <molecule id="Q8IZC6-1"/>
</dbReference>
<dbReference type="ProteomicsDB" id="71318">
    <molecule id="Q8IZC6-3"/>
</dbReference>
<dbReference type="Antibodypedia" id="65300">
    <property type="antibodies" value="28 antibodies from 14 providers"/>
</dbReference>
<dbReference type="DNASU" id="85301"/>
<dbReference type="Ensembl" id="ENST00000356083.8">
    <molecule id="Q8IZC6-1"/>
    <property type="protein sequence ID" value="ENSP00000348385.3"/>
    <property type="gene ID" value="ENSG00000196739.15"/>
</dbReference>
<dbReference type="GeneID" id="85301"/>
<dbReference type="KEGG" id="hsa:85301"/>
<dbReference type="MANE-Select" id="ENST00000356083.8">
    <property type="protein sequence ID" value="ENSP00000348385.3"/>
    <property type="RefSeq nucleotide sequence ID" value="NM_032888.4"/>
    <property type="RefSeq protein sequence ID" value="NP_116277.2"/>
</dbReference>
<dbReference type="UCSC" id="uc011lxl.3">
    <molecule id="Q8IZC6-1"/>
    <property type="organism name" value="human"/>
</dbReference>
<dbReference type="AGR" id="HGNC:22986"/>
<dbReference type="CTD" id="85301"/>
<dbReference type="DisGeNET" id="85301"/>
<dbReference type="GeneCards" id="COL27A1"/>
<dbReference type="HGNC" id="HGNC:22986">
    <property type="gene designation" value="COL27A1"/>
</dbReference>
<dbReference type="HPA" id="ENSG00000196739">
    <property type="expression patterns" value="Tissue enhanced (brain, cervix)"/>
</dbReference>
<dbReference type="MalaCards" id="COL27A1"/>
<dbReference type="MIM" id="608461">
    <property type="type" value="gene"/>
</dbReference>
<dbReference type="MIM" id="615155">
    <property type="type" value="phenotype"/>
</dbReference>
<dbReference type="neXtProt" id="NX_Q8IZC6"/>
<dbReference type="OpenTargets" id="ENSG00000196739"/>
<dbReference type="Orphanet" id="438117">
    <property type="disease" value="Steel syndrome"/>
</dbReference>
<dbReference type="PharmGKB" id="PA134990818"/>
<dbReference type="VEuPathDB" id="HostDB:ENSG00000196739"/>
<dbReference type="eggNOG" id="KOG3544">
    <property type="taxonomic scope" value="Eukaryota"/>
</dbReference>
<dbReference type="GeneTree" id="ENSGT00940000163466"/>
<dbReference type="HOGENOM" id="CLU_001074_19_1_1"/>
<dbReference type="InParanoid" id="Q8IZC6"/>
<dbReference type="OMA" id="CNFTQGG"/>
<dbReference type="OrthoDB" id="8939548at2759"/>
<dbReference type="PAN-GO" id="Q8IZC6">
    <property type="GO annotations" value="4 GO annotations based on evolutionary models"/>
</dbReference>
<dbReference type="PhylomeDB" id="Q8IZC6"/>
<dbReference type="TreeFam" id="TF344135"/>
<dbReference type="PathwayCommons" id="Q8IZC6"/>
<dbReference type="Reactome" id="R-HSA-1650814">
    <property type="pathway name" value="Collagen biosynthesis and modifying enzymes"/>
</dbReference>
<dbReference type="Reactome" id="R-HSA-2022090">
    <property type="pathway name" value="Assembly of collagen fibrils and other multimeric structures"/>
</dbReference>
<dbReference type="Reactome" id="R-HSA-8874081">
    <property type="pathway name" value="MET activates PTK2 signaling"/>
</dbReference>
<dbReference type="Reactome" id="R-HSA-8948216">
    <property type="pathway name" value="Collagen chain trimerization"/>
</dbReference>
<dbReference type="SignaLink" id="Q8IZC6"/>
<dbReference type="BioGRID-ORCS" id="85301">
    <property type="hits" value="9 hits in 1142 CRISPR screens"/>
</dbReference>
<dbReference type="ChiTaRS" id="COL27A1">
    <property type="organism name" value="human"/>
</dbReference>
<dbReference type="GeneWiki" id="Collagen,_type_XXVII,_alpha_1"/>
<dbReference type="GenomeRNAi" id="85301"/>
<dbReference type="Pharos" id="Q8IZC6">
    <property type="development level" value="Tbio"/>
</dbReference>
<dbReference type="PRO" id="PR:Q8IZC6"/>
<dbReference type="Proteomes" id="UP000005640">
    <property type="component" value="Chromosome 9"/>
</dbReference>
<dbReference type="RNAct" id="Q8IZC6">
    <property type="molecule type" value="protein"/>
</dbReference>
<dbReference type="Bgee" id="ENSG00000196739">
    <property type="expression patterns" value="Expressed in tibia and 184 other cell types or tissues"/>
</dbReference>
<dbReference type="ExpressionAtlas" id="Q8IZC6">
    <property type="expression patterns" value="baseline and differential"/>
</dbReference>
<dbReference type="GO" id="GO:0005581">
    <property type="term" value="C:collagen trimer"/>
    <property type="evidence" value="ECO:0000318"/>
    <property type="project" value="GO_Central"/>
</dbReference>
<dbReference type="GO" id="GO:0062023">
    <property type="term" value="C:collagen-containing extracellular matrix"/>
    <property type="evidence" value="ECO:0007005"/>
    <property type="project" value="BHF-UCL"/>
</dbReference>
<dbReference type="GO" id="GO:0005788">
    <property type="term" value="C:endoplasmic reticulum lumen"/>
    <property type="evidence" value="ECO:0000304"/>
    <property type="project" value="Reactome"/>
</dbReference>
<dbReference type="GO" id="GO:0005576">
    <property type="term" value="C:extracellular region"/>
    <property type="evidence" value="ECO:0000304"/>
    <property type="project" value="Reactome"/>
</dbReference>
<dbReference type="GO" id="GO:0005615">
    <property type="term" value="C:extracellular space"/>
    <property type="evidence" value="ECO:0000318"/>
    <property type="project" value="GO_Central"/>
</dbReference>
<dbReference type="GO" id="GO:0005583">
    <property type="term" value="C:fibrillar collagen trimer"/>
    <property type="evidence" value="ECO:0007669"/>
    <property type="project" value="Ensembl"/>
</dbReference>
<dbReference type="GO" id="GO:0030020">
    <property type="term" value="F:extracellular matrix structural constituent conferring tensile strength"/>
    <property type="evidence" value="ECO:0007005"/>
    <property type="project" value="BHF-UCL"/>
</dbReference>
<dbReference type="GO" id="GO:0046872">
    <property type="term" value="F:metal ion binding"/>
    <property type="evidence" value="ECO:0007669"/>
    <property type="project" value="UniProtKB-KW"/>
</dbReference>
<dbReference type="GO" id="GO:0030198">
    <property type="term" value="P:extracellular matrix organization"/>
    <property type="evidence" value="ECO:0007669"/>
    <property type="project" value="Ensembl"/>
</dbReference>
<dbReference type="GO" id="GO:0003431">
    <property type="term" value="P:growth plate cartilage chondrocyte development"/>
    <property type="evidence" value="ECO:0007669"/>
    <property type="project" value="Ensembl"/>
</dbReference>
<dbReference type="GO" id="GO:0001501">
    <property type="term" value="P:skeletal system development"/>
    <property type="evidence" value="ECO:0000318"/>
    <property type="project" value="GO_Central"/>
</dbReference>
<dbReference type="FunFam" id="2.60.120.1000:FF:000011">
    <property type="entry name" value="Collagen alpha-1(XXVII) chain"/>
    <property type="match status" value="1"/>
</dbReference>
<dbReference type="FunFam" id="2.60.120.200:FF:000085">
    <property type="entry name" value="collagen alpha-1(XXVII) chain isoform X1"/>
    <property type="match status" value="1"/>
</dbReference>
<dbReference type="Gene3D" id="2.60.120.1000">
    <property type="match status" value="2"/>
</dbReference>
<dbReference type="Gene3D" id="2.60.120.200">
    <property type="match status" value="1"/>
</dbReference>
<dbReference type="InterPro" id="IPR008160">
    <property type="entry name" value="Collagen"/>
</dbReference>
<dbReference type="InterPro" id="IPR050938">
    <property type="entry name" value="Collagen_Structural_Proteins"/>
</dbReference>
<dbReference type="InterPro" id="IPR013320">
    <property type="entry name" value="ConA-like_dom_sf"/>
</dbReference>
<dbReference type="InterPro" id="IPR000885">
    <property type="entry name" value="Fib_collagen_C"/>
</dbReference>
<dbReference type="InterPro" id="IPR048287">
    <property type="entry name" value="TSPN-like_N"/>
</dbReference>
<dbReference type="PANTHER" id="PTHR37456:SF6">
    <property type="entry name" value="COLLAGEN ALPHA-1(XXIII) CHAIN-LIKE ISOFORM X2"/>
    <property type="match status" value="1"/>
</dbReference>
<dbReference type="PANTHER" id="PTHR37456">
    <property type="entry name" value="SI:CH211-266K2.1"/>
    <property type="match status" value="1"/>
</dbReference>
<dbReference type="Pfam" id="PF01410">
    <property type="entry name" value="COLFI"/>
    <property type="match status" value="2"/>
</dbReference>
<dbReference type="Pfam" id="PF01391">
    <property type="entry name" value="Collagen"/>
    <property type="match status" value="8"/>
</dbReference>
<dbReference type="PRINTS" id="PR01217">
    <property type="entry name" value="PRICHEXTENSN"/>
</dbReference>
<dbReference type="SMART" id="SM00038">
    <property type="entry name" value="COLFI"/>
    <property type="match status" value="1"/>
</dbReference>
<dbReference type="SMART" id="SM00210">
    <property type="entry name" value="TSPN"/>
    <property type="match status" value="1"/>
</dbReference>
<dbReference type="SUPFAM" id="SSF49899">
    <property type="entry name" value="Concanavalin A-like lectins/glucanases"/>
    <property type="match status" value="1"/>
</dbReference>
<dbReference type="PROSITE" id="PS51461">
    <property type="entry name" value="NC1_FIB"/>
    <property type="match status" value="1"/>
</dbReference>
<accession>Q8IZC6</accession>
<accession>Q66K43</accession>
<accession>Q96JF7</accession>
<feature type="signal peptide" evidence="2">
    <location>
        <begin position="1"/>
        <end position="41"/>
    </location>
</feature>
<feature type="propeptide" id="PRO_0000314667" description="N-terminal propeptide">
    <location>
        <begin position="42"/>
        <end position="624"/>
    </location>
</feature>
<feature type="chain" id="PRO_5000089163" description="Collagen alpha-1(XXVII) chain">
    <location>
        <begin position="625"/>
        <end position="1621"/>
    </location>
</feature>
<feature type="propeptide" id="PRO_0000314668" description="C-terminal propeptide">
    <location>
        <begin position="1622"/>
        <end position="1860"/>
    </location>
</feature>
<feature type="domain" description="Laminin G-like">
    <location>
        <begin position="71"/>
        <end position="236"/>
    </location>
</feature>
<feature type="domain" description="Collagen-like 1">
    <location>
        <begin position="625"/>
        <end position="679"/>
    </location>
</feature>
<feature type="domain" description="Collagen-like 2">
    <location>
        <begin position="688"/>
        <end position="747"/>
    </location>
</feature>
<feature type="domain" description="Collagen-like 3">
    <location>
        <begin position="748"/>
        <end position="807"/>
    </location>
</feature>
<feature type="domain" description="Collagen-like 4">
    <location>
        <begin position="808"/>
        <end position="867"/>
    </location>
</feature>
<feature type="domain" description="Collagen-like 5">
    <location>
        <begin position="871"/>
        <end position="930"/>
    </location>
</feature>
<feature type="domain" description="Collagen-like 6">
    <location>
        <begin position="931"/>
        <end position="990"/>
    </location>
</feature>
<feature type="domain" description="Collagen-like 7">
    <location>
        <begin position="1003"/>
        <end position="1062"/>
    </location>
</feature>
<feature type="domain" description="Collagen-like 8">
    <location>
        <begin position="1066"/>
        <end position="1125"/>
    </location>
</feature>
<feature type="domain" description="Collagen-like 9">
    <location>
        <begin position="1126"/>
        <end position="1185"/>
    </location>
</feature>
<feature type="domain" description="Collagen-like 10">
    <location>
        <begin position="1192"/>
        <end position="1251"/>
    </location>
</feature>
<feature type="domain" description="Collagen-like 11">
    <location>
        <begin position="1258"/>
        <end position="1317"/>
    </location>
</feature>
<feature type="domain" description="Collagen-like 12">
    <location>
        <begin position="1318"/>
        <end position="1378"/>
    </location>
</feature>
<feature type="domain" description="Collagen-like 13">
    <location>
        <begin position="1382"/>
        <end position="1441"/>
    </location>
</feature>
<feature type="domain" description="Collagen-like 14">
    <location>
        <begin position="1442"/>
        <end position="1501"/>
    </location>
</feature>
<feature type="domain" description="Collagen-like 15">
    <location>
        <begin position="1502"/>
        <end position="1561"/>
    </location>
</feature>
<feature type="domain" description="Collagen-like 16">
    <location>
        <begin position="1562"/>
        <end position="1621"/>
    </location>
</feature>
<feature type="domain" description="Fibrillar collagen NC1" evidence="3">
    <location>
        <begin position="1660"/>
        <end position="1860"/>
    </location>
</feature>
<feature type="region of interest" description="Disordered" evidence="4">
    <location>
        <begin position="278"/>
        <end position="608"/>
    </location>
</feature>
<feature type="region of interest" description="Triple-helical region">
    <location>
        <begin position="625"/>
        <end position="1618"/>
    </location>
</feature>
<feature type="region of interest" description="Disordered" evidence="4">
    <location>
        <begin position="625"/>
        <end position="772"/>
    </location>
</feature>
<feature type="region of interest" description="Disordered" evidence="4">
    <location>
        <begin position="851"/>
        <end position="1625"/>
    </location>
</feature>
<feature type="compositionally biased region" description="Polar residues" evidence="4">
    <location>
        <begin position="298"/>
        <end position="309"/>
    </location>
</feature>
<feature type="compositionally biased region" description="Polar residues" evidence="4">
    <location>
        <begin position="386"/>
        <end position="409"/>
    </location>
</feature>
<feature type="compositionally biased region" description="Pro residues" evidence="4">
    <location>
        <begin position="432"/>
        <end position="445"/>
    </location>
</feature>
<feature type="compositionally biased region" description="Low complexity" evidence="4">
    <location>
        <begin position="446"/>
        <end position="457"/>
    </location>
</feature>
<feature type="compositionally biased region" description="Low complexity" evidence="4">
    <location>
        <begin position="485"/>
        <end position="505"/>
    </location>
</feature>
<feature type="compositionally biased region" description="Polar residues" evidence="4">
    <location>
        <begin position="509"/>
        <end position="518"/>
    </location>
</feature>
<feature type="compositionally biased region" description="Low complexity" evidence="4">
    <location>
        <begin position="572"/>
        <end position="588"/>
    </location>
</feature>
<feature type="compositionally biased region" description="Low complexity" evidence="4">
    <location>
        <begin position="599"/>
        <end position="608"/>
    </location>
</feature>
<feature type="compositionally biased region" description="Pro residues" evidence="4">
    <location>
        <begin position="654"/>
        <end position="669"/>
    </location>
</feature>
<feature type="compositionally biased region" description="Low complexity" evidence="4">
    <location>
        <begin position="714"/>
        <end position="734"/>
    </location>
</feature>
<feature type="compositionally biased region" description="Low complexity" evidence="4">
    <location>
        <begin position="911"/>
        <end position="924"/>
    </location>
</feature>
<feature type="compositionally biased region" description="Low complexity" evidence="4">
    <location>
        <begin position="932"/>
        <end position="944"/>
    </location>
</feature>
<feature type="compositionally biased region" description="Gly residues" evidence="4">
    <location>
        <begin position="1033"/>
        <end position="1042"/>
    </location>
</feature>
<feature type="compositionally biased region" description="Pro residues" evidence="4">
    <location>
        <begin position="1043"/>
        <end position="1053"/>
    </location>
</feature>
<feature type="compositionally biased region" description="Pro residues" evidence="4">
    <location>
        <begin position="1130"/>
        <end position="1142"/>
    </location>
</feature>
<feature type="compositionally biased region" description="Basic and acidic residues" evidence="4">
    <location>
        <begin position="1202"/>
        <end position="1220"/>
    </location>
</feature>
<feature type="compositionally biased region" description="Basic and acidic residues" evidence="4">
    <location>
        <begin position="1241"/>
        <end position="1253"/>
    </location>
</feature>
<feature type="compositionally biased region" description="Basic and acidic residues" evidence="4">
    <location>
        <begin position="1326"/>
        <end position="1338"/>
    </location>
</feature>
<feature type="compositionally biased region" description="Basic and acidic residues" evidence="4">
    <location>
        <begin position="1350"/>
        <end position="1360"/>
    </location>
</feature>
<feature type="compositionally biased region" description="Low complexity" evidence="4">
    <location>
        <begin position="1449"/>
        <end position="1458"/>
    </location>
</feature>
<feature type="compositionally biased region" description="Low complexity" evidence="4">
    <location>
        <begin position="1572"/>
        <end position="1587"/>
    </location>
</feature>
<feature type="compositionally biased region" description="Pro residues" evidence="4">
    <location>
        <begin position="1603"/>
        <end position="1620"/>
    </location>
</feature>
<feature type="binding site" evidence="1">
    <location>
        <position position="1708"/>
    </location>
    <ligand>
        <name>Ca(2+)</name>
        <dbReference type="ChEBI" id="CHEBI:29108"/>
    </ligand>
</feature>
<feature type="binding site" evidence="1">
    <location>
        <position position="1710"/>
    </location>
    <ligand>
        <name>Ca(2+)</name>
        <dbReference type="ChEBI" id="CHEBI:29108"/>
    </ligand>
</feature>
<feature type="binding site" evidence="1">
    <location>
        <position position="1713"/>
    </location>
    <ligand>
        <name>Ca(2+)</name>
        <dbReference type="ChEBI" id="CHEBI:29108"/>
    </ligand>
</feature>
<feature type="binding site" evidence="1">
    <location>
        <position position="1716"/>
    </location>
    <ligand>
        <name>Ca(2+)</name>
        <dbReference type="ChEBI" id="CHEBI:29108"/>
    </ligand>
</feature>
<feature type="glycosylation site" description="N-linked (GlcNAc...) asparagine" evidence="2">
    <location>
        <position position="271"/>
    </location>
</feature>
<feature type="glycosylation site" description="N-linked (GlcNAc...) asparagine" evidence="2">
    <location>
        <position position="1769"/>
    </location>
</feature>
<feature type="disulfide bond" evidence="3">
    <location>
        <begin position="1690"/>
        <end position="1722"/>
    </location>
</feature>
<feature type="disulfide bond" description="Interchain (with C-1285)" evidence="3">
    <location>
        <position position="1696"/>
    </location>
</feature>
<feature type="disulfide bond" description="Interchain (with C-1268)" evidence="3">
    <location>
        <position position="1713"/>
    </location>
</feature>
<feature type="disulfide bond" evidence="3">
    <location>
        <begin position="1731"/>
        <end position="1858"/>
    </location>
</feature>
<feature type="disulfide bond" evidence="3">
    <location>
        <begin position="1767"/>
        <end position="1811"/>
    </location>
</feature>
<feature type="splice variant" id="VSP_030347" description="In isoform 2." evidence="8">
    <location>
        <begin position="1"/>
        <end position="1033"/>
    </location>
</feature>
<feature type="splice variant" id="VSP_030348" description="In isoform 3." evidence="9">
    <original>GPPGLPGLPGIPGARGPRGPPGPYGNPGLPGPPGAKGQKGDPGLSPGKAHDGAKGDMGLPGLSGNPG</original>
    <variation>VRLSGVCMLLGAPVGDWGIGQVVAPSKDRKRSSLEQGAGYGYILGSSQAPGSSGSAKCIIAHPAPDS</variation>
    <location>
        <begin position="637"/>
        <end position="703"/>
    </location>
</feature>
<feature type="splice variant" id="VSP_030349" description="In isoform 3." evidence="9">
    <location>
        <begin position="704"/>
        <end position="1860"/>
    </location>
</feature>
<feature type="sequence variant" id="VAR_048784" description="In dbSNP:rs2567707.">
    <original>V</original>
    <variation>I</variation>
    <location>
        <position position="89"/>
    </location>
</feature>
<feature type="sequence variant" id="VAR_048785" description="In dbSNP:rs2567706.">
    <original>Q</original>
    <variation>R</variation>
    <location>
        <position position="120"/>
    </location>
</feature>
<feature type="sequence variant" id="VAR_048786" description="In dbSNP:rs34578955.">
    <original>A</original>
    <variation>T</variation>
    <location>
        <position position="265"/>
    </location>
</feature>
<feature type="sequence variant" id="VAR_048787" description="In dbSNP:rs34973417.">
    <original>R</original>
    <variation>C</variation>
    <location>
        <position position="349"/>
    </location>
</feature>
<feature type="sequence variant" id="VAR_048788" description="In dbSNP:rs2241671." evidence="5">
    <original>A</original>
    <variation>T</variation>
    <location>
        <position position="422"/>
    </location>
</feature>
<feature type="sequence variant" id="VAR_048789" description="In dbSNP:rs2808770." evidence="5">
    <original>I</original>
    <variation>T</variation>
    <location>
        <position position="537"/>
    </location>
</feature>
<feature type="sequence variant" id="VAR_048790" description="In dbSNP:rs2567705." evidence="5">
    <original>I</original>
    <variation>F</variation>
    <location>
        <position position="611"/>
    </location>
</feature>
<feature type="sequence variant" id="VAR_072564" description="In STLS; dbSNP:rs140950220." evidence="7">
    <original>G</original>
    <variation>R</variation>
    <location>
        <position position="697"/>
    </location>
</feature>
<feature type="sequence variant" id="VAR_048791" description="In dbSNP:rs35446342.">
    <original>P</original>
    <variation>R</variation>
    <location>
        <position position="720"/>
    </location>
</feature>
<feature type="sequence variant" id="VAR_048792" description="In dbSNP:rs7048607.">
    <original>P</original>
    <variation>Q</variation>
    <location>
        <position position="1116"/>
    </location>
</feature>
<feature type="sequence variant" id="VAR_048793" description="In dbSNP:rs1631319.">
    <original>R</original>
    <variation>Q</variation>
    <location>
        <position position="1348"/>
    </location>
</feature>
<feature type="sequence variant" id="VAR_048794" description="In dbSNP:rs10982134.">
    <original>R</original>
    <variation>Q</variation>
    <location>
        <position position="1354"/>
    </location>
</feature>
<feature type="sequence variant" id="VAR_048795" description="In dbSNP:rs3736252.">
    <original>M</original>
    <variation>V</variation>
    <location>
        <position position="1808"/>
    </location>
</feature>
<sequence>MGAGSARGARGTAAAAAARGGGFLFSWILVSFACHLASTQGAPEDVDILQRLGLSWTKAGSPAPPGVIPFQSGFIFTQRARLQAPTGTVIPAALGTELALVLSLCSHRVNHAFLFAVRSQKRKLQLGLQFLPGKTVVHLGSRRSVAFDLDMHDGRWHHLALELRGRTVTLVTACGQRRVPVLLPFHRDPALDPGGSFLFGKMNPHAVQFEGALCQFSIYPVTQVAHNYCTHLRKQCGQADTYQSPLGPLFSQDSGRPFTFQSDLALLGLENLTTATPALGSLPAGRGPRGTVAPATPTKPQRTSPTNPHQHMAVGGPAQTPLLPAKLSASNALDPMLPASVGGSTRTPRPAAAQPSQKITATKIPKSLPTKPSAPSTSIVPIKSPHPTQKTAPSSFTKSALPTQKQVPPTSRPVPARVSRPAEKPIQRNPGMPRPPPPSTRPLPPTTSSSKKPIPTLARTEAKITSHASKPASARTSTHKPPPFTALSSSPAPTPGSTRSTRPPATMVPPTSGTSTPRTAPAVPTPGSAPTGSKKPIGSEASKKAGPKSSPRKPVPLRPGKAARDVPLSDLTTRPSPRQPQPSQQTTPALVLAPAQFLSSSPRPTSSGYSIFHLAGSTPFPLLMGPPGPKGDCGLPGPPGLPGLPGIPGARGPRGPPGPYGNPGLPGPPGAKGQKGDPGLSPGKAHDGAKGDMGLPGLSGNPGPPGRKGHKGYPGPAGHPGEQGQPGPEGSPGAKGYPGRQGLPGPVGDPGPKGSRGYIGLPGLFGLPGSDGERGLPGVPGKRGKMGMPGFPGVFGERGPPGLDGNPGELGLPGPPGVPGLIGDLGVLGPIGYPGPKGMKGLMGSVGEPGLKGDKGEQGVPGVSGDPGFQGDKGSQGLPGFPGARGKPGPLGKVGDKGSIGFPGPPGPEGFPGDIGPPGDNGPEGMKGKPGARGLPGPRGQLGPEGDEGPMGPPGAPGLEGQPGRKGFPGRPGLDGVKGEPGDPGRPGPVGEQGFMGFIGLVGEPGIVGEKGDRGMMGPPGVPGPKGSMGHPGMPGGMGTPGEPGPQGPPGSRGPPGMRGAKGRRGPRGPDGPAGEQGSRGLKGPPGPQGRPGRPGQQGVAGERGHLGSRGFPGIPGPSGPPGTKGLPGEPGPQGPQGPIGPPGEMGPKGPPGAVGEPGLPGEAGMKGDLGPLGTPGEQGLIGQRGEPGLEGDSGPMGPDGLKGDRGDPGPDGEHGEKGQEGLMGEDGPPGPPGVTGVRGPEGKSGKQGEKGRTGAKGAKGYQGQLGEMGVPGDPGPPGTPGPKGSRGSLGPTGAPGRMGAQGEPGLAGYDGHKGIVGPLGPPGPKGEKGEQGEDGKAEGPPGPPGDRGPVGDRGDRGEPGDPGYPGQEGVQGLRGKPGQQGQPGHPGPRGWPGPKGSKGAEGPKGKQGKAGAPGRRGVQGLQGLPGPRGVVGRQGLEGIAGPDGLPGRDGQAGQQGEQGDDGDPGPMGPAGKRGNPGVAGLPGAQGPPGFKGESGLPGQLGPPGKRGTEGRTGLPGNQGEPGSKGQPGDSGEMGFPGMAGLFGPKGPPGDIGFKGIQGPRGPPGLMGKEGIVGPLGILGPSGLPGPKGDKGSRGDWGLQGPRGPPGPRGRPGPPGPPGGPIQLQQDDLGAAFQTWMDTSGALRPESYSYPDRLVLDQGGEIFKTLHYLSNLIQSIKTPLGTKENPARVCRDLMDCEQKMVDGTYWVDPNLGCSSDTIEVSCNFTHGGQTCLKPITASKVEFAISRVQMNFLHLLSSEVTQHITIHCLNMTVWQEGTGQTPAKQAVRFRAWNGQIFEAGGQFRPEVSMDGCKVQDGRWHQTLFTFRTQDPQQLPIISVDNLPPASSGKQYRLEVGPACFL</sequence>
<proteinExistence type="evidence at protein level"/>